<accession>P81764</accession>
<accession>B5DHK7</accession>
<accession>P26621</accession>
<accession>Q53WW1</accession>
<evidence type="ECO:0000250" key="1"/>
<evidence type="ECO:0000255" key="2">
    <source>
        <dbReference type="PROSITE-ProRule" id="PRU10001"/>
    </source>
</evidence>
<evidence type="ECO:0000305" key="3"/>
<name>ADHR_DROPS</name>
<gene>
    <name type="primary">Adhr</name>
    <name type="synonym">Adh-dup</name>
    <name type="ORF">GA25223</name>
</gene>
<comment type="similarity">
    <text evidence="3">Belongs to the short-chain dehydrogenases/reductases (SDR) family.</text>
</comment>
<reference key="1">
    <citation type="journal article" date="1987" name="Genetics">
        <title>Nucleotide sequence of the Adh gene region of Drosophila pseudoobscura: evolutionary change and evidence for an ancient gene duplication.</title>
        <authorList>
            <person name="Schaeffer S.W."/>
            <person name="Aquadro C.F."/>
        </authorList>
    </citation>
    <scope>NUCLEOTIDE SEQUENCE [GENOMIC DNA]</scope>
</reference>
<reference key="2">
    <citation type="journal article" date="2002" name="Genet. Res.">
        <title>Molecular population genetics of sequence length diversity in the Adh region of Drosophila pseudoobscura.</title>
        <authorList>
            <person name="Schaeffer S.W."/>
        </authorList>
    </citation>
    <scope>NUCLEOTIDE SEQUENCE [GENOMIC DNA]</scope>
    <source>
        <strain>PS271</strain>
    </source>
</reference>
<reference key="3">
    <citation type="journal article" date="2005" name="Genome Res.">
        <title>Comparative genome sequencing of Drosophila pseudoobscura: chromosomal, gene, and cis-element evolution.</title>
        <authorList>
            <person name="Richards S."/>
            <person name="Liu Y."/>
            <person name="Bettencourt B.R."/>
            <person name="Hradecky P."/>
            <person name="Letovsky S."/>
            <person name="Nielsen R."/>
            <person name="Thornton K."/>
            <person name="Hubisz M.J."/>
            <person name="Chen R."/>
            <person name="Meisel R.P."/>
            <person name="Couronne O."/>
            <person name="Hua S."/>
            <person name="Smith M.A."/>
            <person name="Zhang P."/>
            <person name="Liu J."/>
            <person name="Bussemaker H.J."/>
            <person name="van Batenburg M.F."/>
            <person name="Howells S.L."/>
            <person name="Scherer S.E."/>
            <person name="Sodergren E."/>
            <person name="Matthews B.B."/>
            <person name="Crosby M.A."/>
            <person name="Schroeder A.J."/>
            <person name="Ortiz-Barrientos D."/>
            <person name="Rives C.M."/>
            <person name="Metzker M.L."/>
            <person name="Muzny D.M."/>
            <person name="Scott G."/>
            <person name="Steffen D."/>
            <person name="Wheeler D.A."/>
            <person name="Worley K.C."/>
            <person name="Havlak P."/>
            <person name="Durbin K.J."/>
            <person name="Egan A."/>
            <person name="Gill R."/>
            <person name="Hume J."/>
            <person name="Morgan M.B."/>
            <person name="Miner G."/>
            <person name="Hamilton C."/>
            <person name="Huang Y."/>
            <person name="Waldron L."/>
            <person name="Verduzco D."/>
            <person name="Clerc-Blankenburg K.P."/>
            <person name="Dubchak I."/>
            <person name="Noor M.A.F."/>
            <person name="Anderson W."/>
            <person name="White K.P."/>
            <person name="Clark A.G."/>
            <person name="Schaeffer S.W."/>
            <person name="Gelbart W.M."/>
            <person name="Weinstock G.M."/>
            <person name="Gibbs R.A."/>
        </authorList>
    </citation>
    <scope>NUCLEOTIDE SEQUENCE [LARGE SCALE GENOMIC DNA]</scope>
    <source>
        <strain>MV2-25 / Tucson 14011-0121.94</strain>
    </source>
</reference>
<protein>
    <recommendedName>
        <fullName>Alcohol dehydrogenase-related 31 kDa protein</fullName>
    </recommendedName>
</protein>
<keyword id="KW-0560">Oxidoreductase</keyword>
<keyword id="KW-1185">Reference proteome</keyword>
<dbReference type="EMBL" id="Y00602">
    <property type="protein sequence ID" value="CAA68646.1"/>
    <property type="molecule type" value="Genomic_DNA"/>
</dbReference>
<dbReference type="EMBL" id="U64535">
    <property type="protein sequence ID" value="AAL35977.1"/>
    <property type="molecule type" value="Genomic_DNA"/>
</dbReference>
<dbReference type="EMBL" id="CH379058">
    <property type="protein sequence ID" value="EDY69784.1"/>
    <property type="molecule type" value="Genomic_DNA"/>
</dbReference>
<dbReference type="PIR" id="S07246">
    <property type="entry name" value="S07246"/>
</dbReference>
<dbReference type="RefSeq" id="XP_002132382.1">
    <property type="nucleotide sequence ID" value="XM_002132346.2"/>
</dbReference>
<dbReference type="SMR" id="P81764"/>
<dbReference type="FunCoup" id="P81764">
    <property type="interactions" value="27"/>
</dbReference>
<dbReference type="STRING" id="46245.P81764"/>
<dbReference type="EnsemblMetazoa" id="FBtr0280542">
    <property type="protein sequence ID" value="FBpp0278980"/>
    <property type="gene ID" value="FBgn0012689"/>
</dbReference>
<dbReference type="GeneID" id="6903503"/>
<dbReference type="KEGG" id="dpo:6903503"/>
<dbReference type="CTD" id="3772432"/>
<dbReference type="eggNOG" id="KOG4169">
    <property type="taxonomic scope" value="Eukaryota"/>
</dbReference>
<dbReference type="HOGENOM" id="CLU_010194_2_16_1"/>
<dbReference type="InParanoid" id="P81764"/>
<dbReference type="OMA" id="CDEQDID"/>
<dbReference type="Proteomes" id="UP000001819">
    <property type="component" value="Chromosome 4"/>
</dbReference>
<dbReference type="GO" id="GO:0005737">
    <property type="term" value="C:cytoplasm"/>
    <property type="evidence" value="ECO:0007669"/>
    <property type="project" value="TreeGrafter"/>
</dbReference>
<dbReference type="GO" id="GO:0016491">
    <property type="term" value="F:oxidoreductase activity"/>
    <property type="evidence" value="ECO:0007669"/>
    <property type="project" value="UniProtKB-KW"/>
</dbReference>
<dbReference type="CDD" id="cd05323">
    <property type="entry name" value="ADH_SDR_c_like"/>
    <property type="match status" value="1"/>
</dbReference>
<dbReference type="Gene3D" id="3.40.50.720">
    <property type="entry name" value="NAD(P)-binding Rossmann-like Domain"/>
    <property type="match status" value="1"/>
</dbReference>
<dbReference type="InterPro" id="IPR002427">
    <property type="entry name" value="ADH-rel"/>
</dbReference>
<dbReference type="InterPro" id="IPR036291">
    <property type="entry name" value="NAD(P)-bd_dom_sf"/>
</dbReference>
<dbReference type="InterPro" id="IPR020904">
    <property type="entry name" value="Sc_DH/Rdtase_CS"/>
</dbReference>
<dbReference type="InterPro" id="IPR002347">
    <property type="entry name" value="SDR_fam"/>
</dbReference>
<dbReference type="PANTHER" id="PTHR44229">
    <property type="entry name" value="15-HYDROXYPROSTAGLANDIN DEHYDROGENASE [NAD(+)]"/>
    <property type="match status" value="1"/>
</dbReference>
<dbReference type="PANTHER" id="PTHR44229:SF8">
    <property type="entry name" value="ALCOHOL DEHYDROGENASE-RELATED"/>
    <property type="match status" value="1"/>
</dbReference>
<dbReference type="Pfam" id="PF00106">
    <property type="entry name" value="adh_short"/>
    <property type="match status" value="1"/>
</dbReference>
<dbReference type="PRINTS" id="PR01170">
    <property type="entry name" value="ADHRELATED"/>
</dbReference>
<dbReference type="PRINTS" id="PR01167">
    <property type="entry name" value="INSADHFAMILY"/>
</dbReference>
<dbReference type="PRINTS" id="PR00080">
    <property type="entry name" value="SDRFAMILY"/>
</dbReference>
<dbReference type="SUPFAM" id="SSF51735">
    <property type="entry name" value="NAD(P)-binding Rossmann-fold domains"/>
    <property type="match status" value="1"/>
</dbReference>
<dbReference type="PROSITE" id="PS00061">
    <property type="entry name" value="ADH_SHORT"/>
    <property type="match status" value="1"/>
</dbReference>
<feature type="chain" id="PRO_0000054511" description="Alcohol dehydrogenase-related 31 kDa protein">
    <location>
        <begin position="1"/>
        <end position="278"/>
    </location>
</feature>
<feature type="active site" description="Proton acceptor" evidence="2">
    <location>
        <position position="152"/>
    </location>
</feature>
<feature type="binding site" evidence="1">
    <location>
        <begin position="11"/>
        <end position="34"/>
    </location>
    <ligand>
        <name>NAD(+)</name>
        <dbReference type="ChEBI" id="CHEBI:57540"/>
    </ligand>
</feature>
<feature type="binding site" evidence="1">
    <location>
        <position position="139"/>
    </location>
    <ligand>
        <name>substrate</name>
    </ligand>
</feature>
<feature type="sequence conflict" description="In Ref. 1; CAA68646 and 2; AAL35977." evidence="3" ref="1 2">
    <original>F</original>
    <variation>Y</variation>
    <location>
        <position position="172"/>
    </location>
</feature>
<feature type="sequence conflict" description="In Ref. 1; CAA68646 and 2; AAL35977." evidence="3" ref="1 2">
    <original>A</original>
    <variation>E</variation>
    <location>
        <position position="200"/>
    </location>
</feature>
<sequence length="278" mass="30821">MYDLTGKHVCYVADCGGIALETSKVLMTKNIAKLAILQSVENPPAIAQLQSIKHSTQIFFWTFDVTMAREEMKKYFDEVMVQMDYIDVLINGATLCDERNIDATINTNLTGMMNTVATVLPYMDRKMGGSGGLIVNVTSVIGLDPSPVFCAYSASKFGVIGFTRSLADPLYFTQNGVAVMAVCCGPTKVFVDRELTAFLAYGQSFADRLRRAPCQSTAVCGQNIVNAIERSENGQIWIADKGGLESVALHWYWHMADQFVNYMQSTDDEDQEFFLGQR</sequence>
<proteinExistence type="inferred from homology"/>
<organism>
    <name type="scientific">Drosophila pseudoobscura pseudoobscura</name>
    <name type="common">Fruit fly</name>
    <dbReference type="NCBI Taxonomy" id="46245"/>
    <lineage>
        <taxon>Eukaryota</taxon>
        <taxon>Metazoa</taxon>
        <taxon>Ecdysozoa</taxon>
        <taxon>Arthropoda</taxon>
        <taxon>Hexapoda</taxon>
        <taxon>Insecta</taxon>
        <taxon>Pterygota</taxon>
        <taxon>Neoptera</taxon>
        <taxon>Endopterygota</taxon>
        <taxon>Diptera</taxon>
        <taxon>Brachycera</taxon>
        <taxon>Muscomorpha</taxon>
        <taxon>Ephydroidea</taxon>
        <taxon>Drosophilidae</taxon>
        <taxon>Drosophila</taxon>
        <taxon>Sophophora</taxon>
    </lineage>
</organism>